<evidence type="ECO:0000255" key="1">
    <source>
        <dbReference type="HAMAP-Rule" id="MF_01364"/>
    </source>
</evidence>
<evidence type="ECO:0000305" key="2"/>
<proteinExistence type="inferred from homology"/>
<protein>
    <recommendedName>
        <fullName evidence="1">Small ribosomal subunit protein uS14</fullName>
    </recommendedName>
    <alternativeName>
        <fullName evidence="2">30S ribosomal protein S14 type Z</fullName>
    </alternativeName>
</protein>
<name>RS14Z_ELUMP</name>
<accession>B2KEK8</accession>
<sequence length="61" mass="7128">MATKAWVAKMAKPQKFAVRYHNRCQVCGRPRGYYRDFGLCRICLRKMAHQGLIPGVRKSSW</sequence>
<organism>
    <name type="scientific">Elusimicrobium minutum (strain Pei191)</name>
    <dbReference type="NCBI Taxonomy" id="445932"/>
    <lineage>
        <taxon>Bacteria</taxon>
        <taxon>Pseudomonadati</taxon>
        <taxon>Elusimicrobiota</taxon>
        <taxon>Elusimicrobia</taxon>
        <taxon>Elusimicrobiales</taxon>
        <taxon>Elusimicrobiaceae</taxon>
        <taxon>Elusimicrobium</taxon>
    </lineage>
</organism>
<feature type="chain" id="PRO_1000143901" description="Small ribosomal subunit protein uS14">
    <location>
        <begin position="1"/>
        <end position="61"/>
    </location>
</feature>
<feature type="binding site" evidence="1">
    <location>
        <position position="24"/>
    </location>
    <ligand>
        <name>Zn(2+)</name>
        <dbReference type="ChEBI" id="CHEBI:29105"/>
    </ligand>
</feature>
<feature type="binding site" evidence="1">
    <location>
        <position position="27"/>
    </location>
    <ligand>
        <name>Zn(2+)</name>
        <dbReference type="ChEBI" id="CHEBI:29105"/>
    </ligand>
</feature>
<feature type="binding site" evidence="1">
    <location>
        <position position="40"/>
    </location>
    <ligand>
        <name>Zn(2+)</name>
        <dbReference type="ChEBI" id="CHEBI:29105"/>
    </ligand>
</feature>
<feature type="binding site" evidence="1">
    <location>
        <position position="43"/>
    </location>
    <ligand>
        <name>Zn(2+)</name>
        <dbReference type="ChEBI" id="CHEBI:29105"/>
    </ligand>
</feature>
<comment type="function">
    <text evidence="1">Binds 16S rRNA, required for the assembly of 30S particles and may also be responsible for determining the conformation of the 16S rRNA at the A site.</text>
</comment>
<comment type="cofactor">
    <cofactor evidence="1">
        <name>Zn(2+)</name>
        <dbReference type="ChEBI" id="CHEBI:29105"/>
    </cofactor>
    <text evidence="1">Binds 1 zinc ion per subunit.</text>
</comment>
<comment type="subunit">
    <text evidence="1">Part of the 30S ribosomal subunit. Contacts proteins S3 and S10.</text>
</comment>
<comment type="similarity">
    <text evidence="1">Belongs to the universal ribosomal protein uS14 family. Zinc-binding uS14 subfamily.</text>
</comment>
<keyword id="KW-0479">Metal-binding</keyword>
<keyword id="KW-1185">Reference proteome</keyword>
<keyword id="KW-0687">Ribonucleoprotein</keyword>
<keyword id="KW-0689">Ribosomal protein</keyword>
<keyword id="KW-0694">RNA-binding</keyword>
<keyword id="KW-0699">rRNA-binding</keyword>
<keyword id="KW-0862">Zinc</keyword>
<gene>
    <name evidence="1" type="primary">rpsZ</name>
    <name evidence="1" type="synonym">rpsN</name>
    <name type="ordered locus">Emin_1405</name>
</gene>
<reference key="1">
    <citation type="journal article" date="2009" name="Appl. Environ. Microbiol.">
        <title>Genomic analysis of 'Elusimicrobium minutum,' the first cultivated representative of the phylum 'Elusimicrobia' (formerly termite group 1).</title>
        <authorList>
            <person name="Herlemann D.P.R."/>
            <person name="Geissinger O."/>
            <person name="Ikeda-Ohtsubo W."/>
            <person name="Kunin V."/>
            <person name="Sun H."/>
            <person name="Lapidus A."/>
            <person name="Hugenholtz P."/>
            <person name="Brune A."/>
        </authorList>
    </citation>
    <scope>NUCLEOTIDE SEQUENCE [LARGE SCALE GENOMIC DNA]</scope>
    <source>
        <strain>Pei191</strain>
    </source>
</reference>
<dbReference type="EMBL" id="CP001055">
    <property type="protein sequence ID" value="ACC98954.1"/>
    <property type="molecule type" value="Genomic_DNA"/>
</dbReference>
<dbReference type="RefSeq" id="WP_012415569.1">
    <property type="nucleotide sequence ID" value="NC_010644.1"/>
</dbReference>
<dbReference type="SMR" id="B2KEK8"/>
<dbReference type="STRING" id="445932.Emin_1405"/>
<dbReference type="KEGG" id="emi:Emin_1405"/>
<dbReference type="HOGENOM" id="CLU_139869_3_0_0"/>
<dbReference type="OrthoDB" id="9810484at2"/>
<dbReference type="Proteomes" id="UP000001029">
    <property type="component" value="Chromosome"/>
</dbReference>
<dbReference type="GO" id="GO:0005737">
    <property type="term" value="C:cytoplasm"/>
    <property type="evidence" value="ECO:0007669"/>
    <property type="project" value="UniProtKB-ARBA"/>
</dbReference>
<dbReference type="GO" id="GO:0015935">
    <property type="term" value="C:small ribosomal subunit"/>
    <property type="evidence" value="ECO:0007669"/>
    <property type="project" value="TreeGrafter"/>
</dbReference>
<dbReference type="GO" id="GO:0019843">
    <property type="term" value="F:rRNA binding"/>
    <property type="evidence" value="ECO:0007669"/>
    <property type="project" value="UniProtKB-UniRule"/>
</dbReference>
<dbReference type="GO" id="GO:0003735">
    <property type="term" value="F:structural constituent of ribosome"/>
    <property type="evidence" value="ECO:0007669"/>
    <property type="project" value="InterPro"/>
</dbReference>
<dbReference type="GO" id="GO:0008270">
    <property type="term" value="F:zinc ion binding"/>
    <property type="evidence" value="ECO:0007669"/>
    <property type="project" value="UniProtKB-UniRule"/>
</dbReference>
<dbReference type="GO" id="GO:0006412">
    <property type="term" value="P:translation"/>
    <property type="evidence" value="ECO:0007669"/>
    <property type="project" value="UniProtKB-UniRule"/>
</dbReference>
<dbReference type="FunFam" id="4.10.830.10:FF:000001">
    <property type="entry name" value="30S ribosomal protein S14 type Z"/>
    <property type="match status" value="1"/>
</dbReference>
<dbReference type="Gene3D" id="4.10.830.10">
    <property type="entry name" value="30s Ribosomal Protein S14, Chain N"/>
    <property type="match status" value="1"/>
</dbReference>
<dbReference type="HAMAP" id="MF_01364_B">
    <property type="entry name" value="Ribosomal_uS14_2_B"/>
    <property type="match status" value="1"/>
</dbReference>
<dbReference type="InterPro" id="IPR001209">
    <property type="entry name" value="Ribosomal_uS14"/>
</dbReference>
<dbReference type="InterPro" id="IPR023053">
    <property type="entry name" value="Ribosomal_uS14_bact"/>
</dbReference>
<dbReference type="InterPro" id="IPR018271">
    <property type="entry name" value="Ribosomal_uS14_CS"/>
</dbReference>
<dbReference type="InterPro" id="IPR043140">
    <property type="entry name" value="Ribosomal_uS14_sf"/>
</dbReference>
<dbReference type="NCBIfam" id="NF005974">
    <property type="entry name" value="PRK08061.1"/>
    <property type="match status" value="1"/>
</dbReference>
<dbReference type="PANTHER" id="PTHR19836">
    <property type="entry name" value="30S RIBOSOMAL PROTEIN S14"/>
    <property type="match status" value="1"/>
</dbReference>
<dbReference type="PANTHER" id="PTHR19836:SF19">
    <property type="entry name" value="SMALL RIBOSOMAL SUBUNIT PROTEIN US14M"/>
    <property type="match status" value="1"/>
</dbReference>
<dbReference type="Pfam" id="PF00253">
    <property type="entry name" value="Ribosomal_S14"/>
    <property type="match status" value="1"/>
</dbReference>
<dbReference type="SUPFAM" id="SSF57716">
    <property type="entry name" value="Glucocorticoid receptor-like (DNA-binding domain)"/>
    <property type="match status" value="1"/>
</dbReference>
<dbReference type="PROSITE" id="PS00527">
    <property type="entry name" value="RIBOSOMAL_S14"/>
    <property type="match status" value="1"/>
</dbReference>